<feature type="chain" id="PRO_0000258539" description="Small ribosomal subunit protein uS10">
    <location>
        <begin position="1"/>
        <end position="103"/>
    </location>
</feature>
<comment type="function">
    <text evidence="1">Involved in the binding of tRNA to the ribosomes.</text>
</comment>
<comment type="subunit">
    <text evidence="1">Part of the 30S ribosomal subunit.</text>
</comment>
<comment type="similarity">
    <text evidence="1">Belongs to the universal ribosomal protein uS10 family.</text>
</comment>
<protein>
    <recommendedName>
        <fullName evidence="1">Small ribosomal subunit protein uS10</fullName>
    </recommendedName>
    <alternativeName>
        <fullName evidence="2">30S ribosomal protein S10</fullName>
    </alternativeName>
</protein>
<evidence type="ECO:0000255" key="1">
    <source>
        <dbReference type="HAMAP-Rule" id="MF_00508"/>
    </source>
</evidence>
<evidence type="ECO:0000305" key="2"/>
<gene>
    <name evidence="1" type="primary">rpsJ</name>
    <name type="ordered locus">Bxeno_A4082</name>
    <name type="ORF">Bxe_A0313</name>
</gene>
<keyword id="KW-1185">Reference proteome</keyword>
<keyword id="KW-0687">Ribonucleoprotein</keyword>
<keyword id="KW-0689">Ribosomal protein</keyword>
<dbReference type="EMBL" id="CP000270">
    <property type="protein sequence ID" value="ABE32620.1"/>
    <property type="molecule type" value="Genomic_DNA"/>
</dbReference>
<dbReference type="RefSeq" id="WP_006998489.1">
    <property type="nucleotide sequence ID" value="NZ_CP008760.1"/>
</dbReference>
<dbReference type="SMR" id="Q13TG9"/>
<dbReference type="STRING" id="266265.Bxe_A0313"/>
<dbReference type="GeneID" id="97310991"/>
<dbReference type="KEGG" id="bxb:DR64_2483"/>
<dbReference type="KEGG" id="bxe:Bxe_A0313"/>
<dbReference type="eggNOG" id="COG0051">
    <property type="taxonomic scope" value="Bacteria"/>
</dbReference>
<dbReference type="OrthoDB" id="9804464at2"/>
<dbReference type="Proteomes" id="UP000001817">
    <property type="component" value="Chromosome 1"/>
</dbReference>
<dbReference type="GO" id="GO:1990904">
    <property type="term" value="C:ribonucleoprotein complex"/>
    <property type="evidence" value="ECO:0007669"/>
    <property type="project" value="UniProtKB-KW"/>
</dbReference>
<dbReference type="GO" id="GO:0005840">
    <property type="term" value="C:ribosome"/>
    <property type="evidence" value="ECO:0007669"/>
    <property type="project" value="UniProtKB-KW"/>
</dbReference>
<dbReference type="GO" id="GO:0003735">
    <property type="term" value="F:structural constituent of ribosome"/>
    <property type="evidence" value="ECO:0007669"/>
    <property type="project" value="InterPro"/>
</dbReference>
<dbReference type="GO" id="GO:0000049">
    <property type="term" value="F:tRNA binding"/>
    <property type="evidence" value="ECO:0007669"/>
    <property type="project" value="UniProtKB-UniRule"/>
</dbReference>
<dbReference type="GO" id="GO:0006412">
    <property type="term" value="P:translation"/>
    <property type="evidence" value="ECO:0007669"/>
    <property type="project" value="UniProtKB-UniRule"/>
</dbReference>
<dbReference type="FunFam" id="3.30.70.600:FF:000001">
    <property type="entry name" value="30S ribosomal protein S10"/>
    <property type="match status" value="1"/>
</dbReference>
<dbReference type="Gene3D" id="3.30.70.600">
    <property type="entry name" value="Ribosomal protein S10 domain"/>
    <property type="match status" value="1"/>
</dbReference>
<dbReference type="HAMAP" id="MF_00508">
    <property type="entry name" value="Ribosomal_uS10"/>
    <property type="match status" value="1"/>
</dbReference>
<dbReference type="InterPro" id="IPR001848">
    <property type="entry name" value="Ribosomal_uS10"/>
</dbReference>
<dbReference type="InterPro" id="IPR018268">
    <property type="entry name" value="Ribosomal_uS10_CS"/>
</dbReference>
<dbReference type="InterPro" id="IPR027486">
    <property type="entry name" value="Ribosomal_uS10_dom"/>
</dbReference>
<dbReference type="InterPro" id="IPR036838">
    <property type="entry name" value="Ribosomal_uS10_dom_sf"/>
</dbReference>
<dbReference type="NCBIfam" id="NF001861">
    <property type="entry name" value="PRK00596.1"/>
    <property type="match status" value="1"/>
</dbReference>
<dbReference type="NCBIfam" id="TIGR01049">
    <property type="entry name" value="rpsJ_bact"/>
    <property type="match status" value="1"/>
</dbReference>
<dbReference type="PANTHER" id="PTHR11700">
    <property type="entry name" value="30S RIBOSOMAL PROTEIN S10 FAMILY MEMBER"/>
    <property type="match status" value="1"/>
</dbReference>
<dbReference type="Pfam" id="PF00338">
    <property type="entry name" value="Ribosomal_S10"/>
    <property type="match status" value="1"/>
</dbReference>
<dbReference type="PRINTS" id="PR00971">
    <property type="entry name" value="RIBOSOMALS10"/>
</dbReference>
<dbReference type="SMART" id="SM01403">
    <property type="entry name" value="Ribosomal_S10"/>
    <property type="match status" value="1"/>
</dbReference>
<dbReference type="SUPFAM" id="SSF54999">
    <property type="entry name" value="Ribosomal protein S10"/>
    <property type="match status" value="1"/>
</dbReference>
<dbReference type="PROSITE" id="PS00361">
    <property type="entry name" value="RIBOSOMAL_S10"/>
    <property type="match status" value="1"/>
</dbReference>
<reference key="1">
    <citation type="journal article" date="2006" name="Proc. Natl. Acad. Sci. U.S.A.">
        <title>Burkholderia xenovorans LB400 harbors a multi-replicon, 9.73-Mbp genome shaped for versatility.</title>
        <authorList>
            <person name="Chain P.S.G."/>
            <person name="Denef V.J."/>
            <person name="Konstantinidis K.T."/>
            <person name="Vergez L.M."/>
            <person name="Agullo L."/>
            <person name="Reyes V.L."/>
            <person name="Hauser L."/>
            <person name="Cordova M."/>
            <person name="Gomez L."/>
            <person name="Gonzalez M."/>
            <person name="Land M."/>
            <person name="Lao V."/>
            <person name="Larimer F."/>
            <person name="LiPuma J.J."/>
            <person name="Mahenthiralingam E."/>
            <person name="Malfatti S.A."/>
            <person name="Marx C.J."/>
            <person name="Parnell J.J."/>
            <person name="Ramette A."/>
            <person name="Richardson P."/>
            <person name="Seeger M."/>
            <person name="Smith D."/>
            <person name="Spilker T."/>
            <person name="Sul W.J."/>
            <person name="Tsoi T.V."/>
            <person name="Ulrich L.E."/>
            <person name="Zhulin I.B."/>
            <person name="Tiedje J.M."/>
        </authorList>
    </citation>
    <scope>NUCLEOTIDE SEQUENCE [LARGE SCALE GENOMIC DNA]</scope>
    <source>
        <strain>LB400</strain>
    </source>
</reference>
<proteinExistence type="inferred from homology"/>
<name>RS10_PARXL</name>
<accession>Q13TG9</accession>
<organism>
    <name type="scientific">Paraburkholderia xenovorans (strain LB400)</name>
    <dbReference type="NCBI Taxonomy" id="266265"/>
    <lineage>
        <taxon>Bacteria</taxon>
        <taxon>Pseudomonadati</taxon>
        <taxon>Pseudomonadota</taxon>
        <taxon>Betaproteobacteria</taxon>
        <taxon>Burkholderiales</taxon>
        <taxon>Burkholderiaceae</taxon>
        <taxon>Paraburkholderia</taxon>
    </lineage>
</organism>
<sequence length="103" mass="11814">MQNQKIRIRLKAFDYRLIDQSAAEIVDTAKRTGAIVRGPVPLPTRIQRFDILRSPHVNKTSRDQLEIRTHQRLMDIVDPTDKTVDALMKLDLPAGVDVEIKLQ</sequence>